<evidence type="ECO:0000250" key="1"/>
<evidence type="ECO:0000256" key="2">
    <source>
        <dbReference type="SAM" id="MobiDB-lite"/>
    </source>
</evidence>
<evidence type="ECO:0000305" key="3"/>
<organism>
    <name type="scientific">Rice dwarf virus (isolate Akita)</name>
    <name type="common">RDV</name>
    <dbReference type="NCBI Taxonomy" id="142803"/>
    <lineage>
        <taxon>Viruses</taxon>
        <taxon>Riboviria</taxon>
        <taxon>Orthornavirae</taxon>
        <taxon>Duplornaviricota</taxon>
        <taxon>Resentoviricetes</taxon>
        <taxon>Reovirales</taxon>
        <taxon>Sedoreoviridae</taxon>
        <taxon>Phytoreovirus</taxon>
        <taxon>Rice dwarf virus</taxon>
    </lineage>
</organism>
<feature type="chain" id="PRO_0000222800" description="RNA-binding protein">
    <location>
        <begin position="1"/>
        <end position="181"/>
    </location>
</feature>
<feature type="region of interest" description="Disordered" evidence="2">
    <location>
        <begin position="106"/>
        <end position="181"/>
    </location>
</feature>
<feature type="compositionally biased region" description="Basic residues" evidence="2">
    <location>
        <begin position="141"/>
        <end position="157"/>
    </location>
</feature>
<feature type="compositionally biased region" description="Low complexity" evidence="2">
    <location>
        <begin position="160"/>
        <end position="172"/>
    </location>
</feature>
<accession>P28890</accession>
<name>NSP11_RDVA</name>
<proteinExistence type="evidence at transcript level"/>
<reference key="1">
    <citation type="journal article" date="1991" name="J. Gen. Virol.">
        <title>Molecular analysis of rice dwarf phytoreovirus segment S11 corresponding to wound tumour phytoreovirus segment S12.</title>
        <authorList>
            <person name="Suzuki N."/>
            <person name="Harada M."/>
            <person name="Kusano T."/>
        </authorList>
    </citation>
    <scope>NUCLEOTIDE SEQUENCE [MRNA]</scope>
</reference>
<keyword id="KW-1035">Host cytoplasm</keyword>
<keyword id="KW-0694">RNA-binding</keyword>
<organismHost>
    <name type="scientific">Alopecurus aequalis</name>
    <dbReference type="NCBI Taxonomy" id="114194"/>
</organismHost>
<organismHost>
    <name type="scientific">Echinochloa crus-galli</name>
    <name type="common">Barnyard grass</name>
    <name type="synonym">Panicum crus-galli</name>
    <dbReference type="NCBI Taxonomy" id="90397"/>
</organismHost>
<organismHost>
    <name type="scientific">Nephotettix cincticeps</name>
    <name type="common">Green rice leafhopper</name>
    <name type="synonym">Selenocephalus cincticeps</name>
    <dbReference type="NCBI Taxonomy" id="94400"/>
</organismHost>
<organismHost>
    <name type="scientific">Oryza sativa</name>
    <name type="common">Rice</name>
    <dbReference type="NCBI Taxonomy" id="4530"/>
</organismHost>
<organismHost>
    <name type="scientific">Paspalum</name>
    <dbReference type="NCBI Taxonomy" id="147271"/>
</organismHost>
<sequence>MTASESFVGMQVLAQDKEVKATFIALDRKLPANLKVPYMKNAKYRTCICPSSNHLVDDCVCEDVIIAYTAHRNNAVAALLYSDGNVIHRSGTLKPKSQNRFDLRGFLTSVNPGESSRNEAGASKSTQKTYDRKDKSPSKSRNSKKGAKKSSSARKKKEYSSNSETDLSSDSDANTRKSKRK</sequence>
<dbReference type="EMBL" id="D10249">
    <property type="protein sequence ID" value="BAA01094.1"/>
    <property type="molecule type" value="mRNA"/>
</dbReference>
<dbReference type="PIR" id="JQ1364">
    <property type="entry name" value="MNXRRD"/>
</dbReference>
<dbReference type="GO" id="GO:0030430">
    <property type="term" value="C:host cell cytoplasm"/>
    <property type="evidence" value="ECO:0007669"/>
    <property type="project" value="UniProtKB-SubCell"/>
</dbReference>
<dbReference type="GO" id="GO:0003723">
    <property type="term" value="F:RNA binding"/>
    <property type="evidence" value="ECO:0007669"/>
    <property type="project" value="UniProtKB-KW"/>
</dbReference>
<dbReference type="InterPro" id="IPR035351">
    <property type="entry name" value="Pns11/12"/>
</dbReference>
<dbReference type="Pfam" id="PF17464">
    <property type="entry name" value="Pns11_12"/>
    <property type="match status" value="1"/>
</dbReference>
<comment type="function">
    <text evidence="1">Constituent of viral factories. Binds to ssRNA and dsRNA (By similarity).</text>
</comment>
<comment type="subcellular location">
    <subcellularLocation>
        <location evidence="1">Host cytoplasm</location>
    </subcellularLocation>
    <text evidence="1">Constituent of spherical cytoplasmic structures, called virus factories, that appear early after infection and are the site of viral replication and packaging.</text>
</comment>
<comment type="similarity">
    <text evidence="3">Belongs to the phytoreovirus RNA-binding protein family.</text>
</comment>
<protein>
    <recommendedName>
        <fullName>RNA-binding protein</fullName>
    </recommendedName>
    <alternativeName>
        <fullName>Non-structural protein 11</fullName>
        <shortName>Pns11</shortName>
    </alternativeName>
</protein>